<gene>
    <name type="primary">Anxa3</name>
    <name type="synonym">Anx3</name>
</gene>
<dbReference type="EMBL" id="M20559">
    <property type="protein sequence ID" value="AAA41511.1"/>
    <property type="molecule type" value="mRNA"/>
</dbReference>
<dbReference type="EMBL" id="BC081856">
    <property type="protein sequence ID" value="AAH81856.1"/>
    <property type="molecule type" value="mRNA"/>
</dbReference>
<dbReference type="PIR" id="A29250">
    <property type="entry name" value="LURT3"/>
</dbReference>
<dbReference type="RefSeq" id="NP_036955.2">
    <property type="nucleotide sequence ID" value="NM_012823.2"/>
</dbReference>
<dbReference type="RefSeq" id="XP_006250756.1">
    <property type="nucleotide sequence ID" value="XM_006250694.3"/>
</dbReference>
<dbReference type="RefSeq" id="XP_006250758.1">
    <property type="nucleotide sequence ID" value="XM_006250696.5"/>
</dbReference>
<dbReference type="RefSeq" id="XP_038947560.1">
    <property type="nucleotide sequence ID" value="XM_039091632.2"/>
</dbReference>
<dbReference type="RefSeq" id="XP_063128938.1">
    <property type="nucleotide sequence ID" value="XM_063272868.1"/>
</dbReference>
<dbReference type="SMR" id="P14669"/>
<dbReference type="FunCoup" id="P14669">
    <property type="interactions" value="525"/>
</dbReference>
<dbReference type="IntAct" id="P14669">
    <property type="interactions" value="4"/>
</dbReference>
<dbReference type="STRING" id="10116.ENSRNOP00000063496"/>
<dbReference type="iPTMnet" id="P14669"/>
<dbReference type="PhosphoSitePlus" id="P14669"/>
<dbReference type="PaxDb" id="10116-ENSRNOP00000063496"/>
<dbReference type="Ensembl" id="ENSRNOT00000068134.4">
    <property type="protein sequence ID" value="ENSRNOP00000063496.3"/>
    <property type="gene ID" value="ENSRNOG00000002045.8"/>
</dbReference>
<dbReference type="GeneID" id="25291"/>
<dbReference type="KEGG" id="rno:25291"/>
<dbReference type="UCSC" id="RGD:2119">
    <property type="organism name" value="rat"/>
</dbReference>
<dbReference type="AGR" id="RGD:2119"/>
<dbReference type="CTD" id="306"/>
<dbReference type="RGD" id="2119">
    <property type="gene designation" value="Anxa3"/>
</dbReference>
<dbReference type="eggNOG" id="KOG0819">
    <property type="taxonomic scope" value="Eukaryota"/>
</dbReference>
<dbReference type="GeneTree" id="ENSGT00940000159174"/>
<dbReference type="HOGENOM" id="CLU_025300_0_0_1"/>
<dbReference type="InParanoid" id="P14669"/>
<dbReference type="OMA" id="DYNSRFM"/>
<dbReference type="PhylomeDB" id="P14669"/>
<dbReference type="PRO" id="PR:P14669"/>
<dbReference type="Proteomes" id="UP000002494">
    <property type="component" value="Chromosome 14"/>
</dbReference>
<dbReference type="Bgee" id="ENSRNOG00000002045">
    <property type="expression patterns" value="Expressed in lung and 20 other cell types or tissues"/>
</dbReference>
<dbReference type="ExpressionAtlas" id="P14669">
    <property type="expression patterns" value="baseline and differential"/>
</dbReference>
<dbReference type="GO" id="GO:0030424">
    <property type="term" value="C:axon"/>
    <property type="evidence" value="ECO:0000314"/>
    <property type="project" value="RGD"/>
</dbReference>
<dbReference type="GO" id="GO:0005737">
    <property type="term" value="C:cytoplasm"/>
    <property type="evidence" value="ECO:0000266"/>
    <property type="project" value="RGD"/>
</dbReference>
<dbReference type="GO" id="GO:0030425">
    <property type="term" value="C:dendrite"/>
    <property type="evidence" value="ECO:0000314"/>
    <property type="project" value="RGD"/>
</dbReference>
<dbReference type="GO" id="GO:0016020">
    <property type="term" value="C:membrane"/>
    <property type="evidence" value="ECO:0000266"/>
    <property type="project" value="RGD"/>
</dbReference>
<dbReference type="GO" id="GO:0043025">
    <property type="term" value="C:neuronal cell body"/>
    <property type="evidence" value="ECO:0000314"/>
    <property type="project" value="RGD"/>
</dbReference>
<dbReference type="GO" id="GO:0005634">
    <property type="term" value="C:nucleus"/>
    <property type="evidence" value="ECO:0000318"/>
    <property type="project" value="GO_Central"/>
</dbReference>
<dbReference type="GO" id="GO:0030670">
    <property type="term" value="C:phagocytic vesicle membrane"/>
    <property type="evidence" value="ECO:0000266"/>
    <property type="project" value="RGD"/>
</dbReference>
<dbReference type="GO" id="GO:0005886">
    <property type="term" value="C:plasma membrane"/>
    <property type="evidence" value="ECO:0000266"/>
    <property type="project" value="RGD"/>
</dbReference>
<dbReference type="GO" id="GO:0042581">
    <property type="term" value="C:specific granule"/>
    <property type="evidence" value="ECO:0000266"/>
    <property type="project" value="RGD"/>
</dbReference>
<dbReference type="GO" id="GO:0012506">
    <property type="term" value="C:vesicle membrane"/>
    <property type="evidence" value="ECO:0000318"/>
    <property type="project" value="GO_Central"/>
</dbReference>
<dbReference type="GO" id="GO:0005509">
    <property type="term" value="F:calcium ion binding"/>
    <property type="evidence" value="ECO:0007669"/>
    <property type="project" value="InterPro"/>
</dbReference>
<dbReference type="GO" id="GO:0005544">
    <property type="term" value="F:calcium-dependent phospholipid binding"/>
    <property type="evidence" value="ECO:0000314"/>
    <property type="project" value="RGD"/>
</dbReference>
<dbReference type="GO" id="GO:0048306">
    <property type="term" value="F:calcium-dependent protein binding"/>
    <property type="evidence" value="ECO:0000266"/>
    <property type="project" value="RGD"/>
</dbReference>
<dbReference type="GO" id="GO:0001786">
    <property type="term" value="F:phosphatidylserine binding"/>
    <property type="evidence" value="ECO:0000318"/>
    <property type="project" value="GO_Central"/>
</dbReference>
<dbReference type="GO" id="GO:0019834">
    <property type="term" value="F:phospholipase A2 inhibitor activity"/>
    <property type="evidence" value="ECO:0000314"/>
    <property type="project" value="RGD"/>
</dbReference>
<dbReference type="GO" id="GO:0031100">
    <property type="term" value="P:animal organ regeneration"/>
    <property type="evidence" value="ECO:0000270"/>
    <property type="project" value="RGD"/>
</dbReference>
<dbReference type="GO" id="GO:0042742">
    <property type="term" value="P:defense response to bacterium"/>
    <property type="evidence" value="ECO:0000266"/>
    <property type="project" value="RGD"/>
</dbReference>
<dbReference type="GO" id="GO:0021766">
    <property type="term" value="P:hippocampus development"/>
    <property type="evidence" value="ECO:0000270"/>
    <property type="project" value="RGD"/>
</dbReference>
<dbReference type="GO" id="GO:0043312">
    <property type="term" value="P:neutrophil degranulation"/>
    <property type="evidence" value="ECO:0000266"/>
    <property type="project" value="RGD"/>
</dbReference>
<dbReference type="GO" id="GO:0006909">
    <property type="term" value="P:phagocytosis"/>
    <property type="evidence" value="ECO:0000266"/>
    <property type="project" value="RGD"/>
</dbReference>
<dbReference type="GO" id="GO:0045766">
    <property type="term" value="P:positive regulation of angiogenesis"/>
    <property type="evidence" value="ECO:0000266"/>
    <property type="project" value="RGD"/>
</dbReference>
<dbReference type="GO" id="GO:0051054">
    <property type="term" value="P:positive regulation of DNA metabolic process"/>
    <property type="evidence" value="ECO:0000315"/>
    <property type="project" value="RGD"/>
</dbReference>
<dbReference type="GO" id="GO:0010595">
    <property type="term" value="P:positive regulation of endothelial cell migration"/>
    <property type="evidence" value="ECO:0000266"/>
    <property type="project" value="RGD"/>
</dbReference>
<dbReference type="GO" id="GO:0051384">
    <property type="term" value="P:response to glucocorticoid"/>
    <property type="evidence" value="ECO:0000270"/>
    <property type="project" value="RGD"/>
</dbReference>
<dbReference type="GO" id="GO:0070848">
    <property type="term" value="P:response to growth factor"/>
    <property type="evidence" value="ECO:0000270"/>
    <property type="project" value="RGD"/>
</dbReference>
<dbReference type="FunFam" id="1.10.220.10:FF:000001">
    <property type="entry name" value="Annexin"/>
    <property type="match status" value="1"/>
</dbReference>
<dbReference type="FunFam" id="1.10.220.10:FF:000002">
    <property type="entry name" value="Annexin"/>
    <property type="match status" value="1"/>
</dbReference>
<dbReference type="FunFam" id="1.10.220.10:FF:000003">
    <property type="entry name" value="Annexin"/>
    <property type="match status" value="1"/>
</dbReference>
<dbReference type="FunFam" id="1.10.220.10:FF:000004">
    <property type="entry name" value="Annexin"/>
    <property type="match status" value="1"/>
</dbReference>
<dbReference type="Gene3D" id="1.10.220.10">
    <property type="entry name" value="Annexin"/>
    <property type="match status" value="4"/>
</dbReference>
<dbReference type="InterPro" id="IPR001464">
    <property type="entry name" value="Annexin"/>
</dbReference>
<dbReference type="InterPro" id="IPR018502">
    <property type="entry name" value="Annexin_repeat"/>
</dbReference>
<dbReference type="InterPro" id="IPR018252">
    <property type="entry name" value="Annexin_repeat_CS"/>
</dbReference>
<dbReference type="InterPro" id="IPR037104">
    <property type="entry name" value="Annexin_sf"/>
</dbReference>
<dbReference type="InterPro" id="IPR002390">
    <property type="entry name" value="ANX3"/>
</dbReference>
<dbReference type="PANTHER" id="PTHR10502">
    <property type="entry name" value="ANNEXIN"/>
    <property type="match status" value="1"/>
</dbReference>
<dbReference type="PANTHER" id="PTHR10502:SF25">
    <property type="entry name" value="ANNEXIN A3"/>
    <property type="match status" value="1"/>
</dbReference>
<dbReference type="Pfam" id="PF00191">
    <property type="entry name" value="Annexin"/>
    <property type="match status" value="4"/>
</dbReference>
<dbReference type="PRINTS" id="PR00196">
    <property type="entry name" value="ANNEXIN"/>
</dbReference>
<dbReference type="PRINTS" id="PR00199">
    <property type="entry name" value="ANNEXINIII"/>
</dbReference>
<dbReference type="SMART" id="SM00335">
    <property type="entry name" value="ANX"/>
    <property type="match status" value="4"/>
</dbReference>
<dbReference type="SUPFAM" id="SSF47874">
    <property type="entry name" value="Annexin"/>
    <property type="match status" value="1"/>
</dbReference>
<dbReference type="PROSITE" id="PS00223">
    <property type="entry name" value="ANNEXIN_1"/>
    <property type="match status" value="4"/>
</dbReference>
<dbReference type="PROSITE" id="PS51897">
    <property type="entry name" value="ANNEXIN_2"/>
    <property type="match status" value="4"/>
</dbReference>
<organism>
    <name type="scientific">Rattus norvegicus</name>
    <name type="common">Rat</name>
    <dbReference type="NCBI Taxonomy" id="10116"/>
    <lineage>
        <taxon>Eukaryota</taxon>
        <taxon>Metazoa</taxon>
        <taxon>Chordata</taxon>
        <taxon>Craniata</taxon>
        <taxon>Vertebrata</taxon>
        <taxon>Euteleostomi</taxon>
        <taxon>Mammalia</taxon>
        <taxon>Eutheria</taxon>
        <taxon>Euarchontoglires</taxon>
        <taxon>Glires</taxon>
        <taxon>Rodentia</taxon>
        <taxon>Myomorpha</taxon>
        <taxon>Muroidea</taxon>
        <taxon>Muridae</taxon>
        <taxon>Murinae</taxon>
        <taxon>Rattus</taxon>
    </lineage>
</organism>
<name>ANXA3_RAT</name>
<evidence type="ECO:0000250" key="1">
    <source>
        <dbReference type="UniProtKB" id="O35639"/>
    </source>
</evidence>
<evidence type="ECO:0000255" key="2">
    <source>
        <dbReference type="PROSITE-ProRule" id="PRU01245"/>
    </source>
</evidence>
<evidence type="ECO:0000305" key="3"/>
<evidence type="ECO:0007744" key="4">
    <source>
    </source>
</evidence>
<accession>P14669</accession>
<accession>Q642C2</accession>
<proteinExistence type="evidence at protein level"/>
<reference key="1">
    <citation type="journal article" date="1988" name="J. Biol. Chem.">
        <title>Five distinct calcium and phospholipid binding proteins share homology with lipocortin I.</title>
        <authorList>
            <person name="Pepinsky R.B."/>
            <person name="Tizard R."/>
            <person name="Mattaliano R.J."/>
            <person name="Sinclair L.K."/>
            <person name="Miller G.T."/>
            <person name="Browning J.L."/>
            <person name="Chow E.P."/>
            <person name="Burne C."/>
            <person name="Huang K.-S."/>
            <person name="Pratt D."/>
            <person name="Wachter L."/>
            <person name="Hession C."/>
            <person name="Frey A.Z."/>
            <person name="Wallner B.P."/>
        </authorList>
    </citation>
    <scope>NUCLEOTIDE SEQUENCE [MRNA]</scope>
</reference>
<reference key="2">
    <citation type="journal article" date="2004" name="Genome Res.">
        <title>The status, quality, and expansion of the NIH full-length cDNA project: the Mammalian Gene Collection (MGC).</title>
        <authorList>
            <consortium name="The MGC Project Team"/>
        </authorList>
    </citation>
    <scope>NUCLEOTIDE SEQUENCE [LARGE SCALE MRNA]</scope>
    <source>
        <tissue>Heart</tissue>
    </source>
</reference>
<reference key="3">
    <citation type="submission" date="2007-04" db="UniProtKB">
        <authorList>
            <person name="Lubec G."/>
            <person name="Afjehi-Sadat L."/>
            <person name="Chen W.-Q."/>
        </authorList>
    </citation>
    <scope>PROTEIN SEQUENCE OF 41-49; 191-205; 231-246 AND 295-313</scope>
    <scope>IDENTIFICATION BY MASS SPECTROMETRY</scope>
    <source>
        <strain>Sprague-Dawley</strain>
        <tissue>Hippocampus</tissue>
        <tissue>Spinal cord</tissue>
    </source>
</reference>
<reference key="4">
    <citation type="journal article" date="2012" name="Nat. Commun.">
        <title>Quantitative maps of protein phosphorylation sites across 14 different rat organs and tissues.</title>
        <authorList>
            <person name="Lundby A."/>
            <person name="Secher A."/>
            <person name="Lage K."/>
            <person name="Nordsborg N.B."/>
            <person name="Dmytriyev A."/>
            <person name="Lundby C."/>
            <person name="Olsen J.V."/>
        </authorList>
    </citation>
    <scope>PHOSPHORYLATION [LARGE SCALE ANALYSIS] AT THR-268</scope>
    <scope>IDENTIFICATION BY MASS SPECTROMETRY [LARGE SCALE ANALYSIS]</scope>
</reference>
<keyword id="KW-0007">Acetylation</keyword>
<keyword id="KW-0041">Annexin</keyword>
<keyword id="KW-0106">Calcium</keyword>
<keyword id="KW-0111">Calcium/phospholipid-binding</keyword>
<keyword id="KW-0903">Direct protein sequencing</keyword>
<keyword id="KW-0593">Phospholipase A2 inhibitor</keyword>
<keyword id="KW-0597">Phosphoprotein</keyword>
<keyword id="KW-1185">Reference proteome</keyword>
<keyword id="KW-0677">Repeat</keyword>
<sequence>MAASLWVGPRGTINNYPGFNPSVDAEAIRKAIKGIGTDEKTLINILTERSNAQRQLIVKQYQEAYEQALKADLKGDLSGHFEHVMVALITAPAVFDAKQLKKSMRGMGTDEDTLIEILTTRTSRQMKEISQAYYTAYKKNLRDDISSETSGDFRKALLTLADGGRDESLKVDEHLAKKDAQTLYDAGEKKWGTDEDKFTEILCLRSFPQLKLTFDEYRNISQKDIEDSIKGELSGHFEDLLLAVVRCTRNTPAFLAGRLHQALKGAGTDEFTLNRIMVSRSEIDLLDIRREFKKHYGCSLYSAIQSDTSGDYRTVLLKICGGDD</sequence>
<comment type="function">
    <text>Inhibitor of phospholipase A2, also possesses anti-coagulant properties.</text>
</comment>
<comment type="domain">
    <text>A pair of annexin repeats may form one binding site for calcium and phospholipid.</text>
</comment>
<comment type="similarity">
    <text evidence="2 3">Belongs to the annexin family.</text>
</comment>
<protein>
    <recommendedName>
        <fullName>Annexin A3</fullName>
    </recommendedName>
    <alternativeName>
        <fullName>35-alpha calcimedin</fullName>
    </alternativeName>
    <alternativeName>
        <fullName>Annexin III</fullName>
    </alternativeName>
    <alternativeName>
        <fullName>Annexin-3</fullName>
    </alternativeName>
    <alternativeName>
        <fullName>Lipocortin III</fullName>
    </alternativeName>
    <alternativeName>
        <fullName>Placental anticoagulant protein III</fullName>
        <shortName>PAP-III</shortName>
    </alternativeName>
</protein>
<feature type="chain" id="PRO_0000067479" description="Annexin A3">
    <location>
        <begin position="1"/>
        <end position="324"/>
    </location>
</feature>
<feature type="repeat" description="Annexin 1" evidence="2">
    <location>
        <begin position="19"/>
        <end position="90"/>
    </location>
</feature>
<feature type="repeat" description="Annexin 2" evidence="2">
    <location>
        <begin position="91"/>
        <end position="162"/>
    </location>
</feature>
<feature type="repeat" description="Annexin 3" evidence="2">
    <location>
        <begin position="174"/>
        <end position="246"/>
    </location>
</feature>
<feature type="repeat" description="Annexin 4" evidence="2">
    <location>
        <begin position="250"/>
        <end position="321"/>
    </location>
</feature>
<feature type="modified residue" description="N6-acetyllysine" evidence="1">
    <location>
        <position position="178"/>
    </location>
</feature>
<feature type="modified residue" description="Phosphothreonine" evidence="4">
    <location>
        <position position="268"/>
    </location>
</feature>
<feature type="sequence conflict" description="In Ref. 1; AAA41511." evidence="3" ref="1">
    <original>QY</original>
    <variation>HI</variation>
    <location>
        <begin position="60"/>
        <end position="61"/>
    </location>
</feature>